<organism>
    <name type="scientific">Acidianus filamentous virus 2 (isolate Italy/Pozzuoli)</name>
    <name type="common">AFV-2</name>
    <dbReference type="NCBI Taxonomy" id="654910"/>
    <lineage>
        <taxon>Viruses</taxon>
        <taxon>Adnaviria</taxon>
        <taxon>Zilligvirae</taxon>
        <taxon>Taleaviricota</taxon>
        <taxon>Tokiviricetes</taxon>
        <taxon>Ligamenvirales</taxon>
        <taxon>Lipothrixviridae</taxon>
        <taxon>Deltalipothrixvirus</taxon>
        <taxon>Acidianus filamentous virus 2</taxon>
    </lineage>
</organism>
<accession>Q573E3</accession>
<keyword id="KW-0175">Coiled coil</keyword>
<keyword id="KW-1185">Reference proteome</keyword>
<protein>
    <recommendedName>
        <fullName>Uncharacterized protein ORF100a</fullName>
    </recommendedName>
</protein>
<proteinExistence type="predicted"/>
<organismHost>
    <name type="scientific">Acidianus sp. F28</name>
    <dbReference type="NCBI Taxonomy" id="315458"/>
</organismHost>
<reference key="1">
    <citation type="journal article" date="2005" name="J. Bacteriol.">
        <title>Structure and genome organization of AFV2, a novel archaeal lipothrixvirus with unusual terminal and core structures.</title>
        <authorList>
            <person name="Haring M."/>
            <person name="Vestergaard G."/>
            <person name="Brugger K."/>
            <person name="Rachel R."/>
            <person name="Garrett R.A."/>
            <person name="Prangishvili D."/>
        </authorList>
    </citation>
    <scope>NUCLEOTIDE SEQUENCE [GENOMIC DNA]</scope>
</reference>
<sequence length="100" mass="11948">MPLDNSFPLSQLSKVSERVLEIHLELLDTKSKLNDIYKDICELQRFTEQLINDDDLRESYVSSKPELSKNWEKLKKEIEQKHKEIQELISEFDNMFINSF</sequence>
<dbReference type="EMBL" id="AJ854042">
    <property type="protein sequence ID" value="CAH69413.1"/>
    <property type="molecule type" value="Genomic_DNA"/>
</dbReference>
<dbReference type="RefSeq" id="YP_001496951.1">
    <property type="nucleotide sequence ID" value="NC_009884.1"/>
</dbReference>
<dbReference type="SMR" id="Q573E3"/>
<dbReference type="KEGG" id="vg:5656074"/>
<dbReference type="Proteomes" id="UP000006364">
    <property type="component" value="Genome"/>
</dbReference>
<dbReference type="SUPFAM" id="SSF58100">
    <property type="entry name" value="Bacterial hemolysins"/>
    <property type="match status" value="1"/>
</dbReference>
<name>Y100A_AFV2P</name>
<evidence type="ECO:0000255" key="1"/>
<gene>
    <name type="ORF">ORF100a</name>
</gene>
<feature type="chain" id="PRO_0000384497" description="Uncharacterized protein ORF100a">
    <location>
        <begin position="1"/>
        <end position="100"/>
    </location>
</feature>
<feature type="coiled-coil region" evidence="1">
    <location>
        <begin position="65"/>
        <end position="96"/>
    </location>
</feature>